<protein>
    <recommendedName>
        <fullName evidence="1">Glutamate--tRNA ligase</fullName>
        <ecNumber evidence="1">6.1.1.17</ecNumber>
    </recommendedName>
    <alternativeName>
        <fullName evidence="1">Glutamyl-tRNA synthetase</fullName>
        <shortName evidence="1">GluRS</shortName>
    </alternativeName>
</protein>
<accession>A6L0E8</accession>
<dbReference type="EC" id="6.1.1.17" evidence="1"/>
<dbReference type="EMBL" id="CP000139">
    <property type="protein sequence ID" value="ABR39162.1"/>
    <property type="molecule type" value="Genomic_DNA"/>
</dbReference>
<dbReference type="RefSeq" id="WP_005845466.1">
    <property type="nucleotide sequence ID" value="NZ_JANSWM010000086.1"/>
</dbReference>
<dbReference type="SMR" id="A6L0E8"/>
<dbReference type="STRING" id="435590.BVU_1475"/>
<dbReference type="PaxDb" id="435590-BVU_1475"/>
<dbReference type="GeneID" id="5302441"/>
<dbReference type="KEGG" id="bvu:BVU_1475"/>
<dbReference type="eggNOG" id="COG0008">
    <property type="taxonomic scope" value="Bacteria"/>
</dbReference>
<dbReference type="HOGENOM" id="CLU_015768_6_3_10"/>
<dbReference type="BioCyc" id="BVUL435590:G1G59-1545-MONOMER"/>
<dbReference type="Proteomes" id="UP000002861">
    <property type="component" value="Chromosome"/>
</dbReference>
<dbReference type="GO" id="GO:0005829">
    <property type="term" value="C:cytosol"/>
    <property type="evidence" value="ECO:0007669"/>
    <property type="project" value="TreeGrafter"/>
</dbReference>
<dbReference type="GO" id="GO:0005524">
    <property type="term" value="F:ATP binding"/>
    <property type="evidence" value="ECO:0007669"/>
    <property type="project" value="UniProtKB-UniRule"/>
</dbReference>
<dbReference type="GO" id="GO:0004818">
    <property type="term" value="F:glutamate-tRNA ligase activity"/>
    <property type="evidence" value="ECO:0007669"/>
    <property type="project" value="UniProtKB-UniRule"/>
</dbReference>
<dbReference type="GO" id="GO:0000049">
    <property type="term" value="F:tRNA binding"/>
    <property type="evidence" value="ECO:0007669"/>
    <property type="project" value="InterPro"/>
</dbReference>
<dbReference type="GO" id="GO:0008270">
    <property type="term" value="F:zinc ion binding"/>
    <property type="evidence" value="ECO:0007669"/>
    <property type="project" value="InterPro"/>
</dbReference>
<dbReference type="GO" id="GO:0006424">
    <property type="term" value="P:glutamyl-tRNA aminoacylation"/>
    <property type="evidence" value="ECO:0007669"/>
    <property type="project" value="UniProtKB-UniRule"/>
</dbReference>
<dbReference type="CDD" id="cd00808">
    <property type="entry name" value="GluRS_core"/>
    <property type="match status" value="1"/>
</dbReference>
<dbReference type="FunFam" id="3.40.50.620:FF:000127">
    <property type="entry name" value="Glutamate--tRNA ligase"/>
    <property type="match status" value="1"/>
</dbReference>
<dbReference type="Gene3D" id="1.10.10.350">
    <property type="match status" value="1"/>
</dbReference>
<dbReference type="Gene3D" id="3.40.50.620">
    <property type="entry name" value="HUPs"/>
    <property type="match status" value="1"/>
</dbReference>
<dbReference type="HAMAP" id="MF_00022">
    <property type="entry name" value="Glu_tRNA_synth_type1"/>
    <property type="match status" value="1"/>
</dbReference>
<dbReference type="InterPro" id="IPR045462">
    <property type="entry name" value="aa-tRNA-synth_I_cd-bd"/>
</dbReference>
<dbReference type="InterPro" id="IPR020751">
    <property type="entry name" value="aa-tRNA-synth_I_codon-bd_sub2"/>
</dbReference>
<dbReference type="InterPro" id="IPR001412">
    <property type="entry name" value="aa-tRNA-synth_I_CS"/>
</dbReference>
<dbReference type="InterPro" id="IPR008925">
    <property type="entry name" value="aa_tRNA-synth_I_cd-bd_sf"/>
</dbReference>
<dbReference type="InterPro" id="IPR004527">
    <property type="entry name" value="Glu-tRNA-ligase_bac/mito"/>
</dbReference>
<dbReference type="InterPro" id="IPR000924">
    <property type="entry name" value="Glu/Gln-tRNA-synth"/>
</dbReference>
<dbReference type="InterPro" id="IPR020058">
    <property type="entry name" value="Glu/Gln-tRNA-synth_Ib_cat-dom"/>
</dbReference>
<dbReference type="InterPro" id="IPR049940">
    <property type="entry name" value="GluQ/Sye"/>
</dbReference>
<dbReference type="InterPro" id="IPR033910">
    <property type="entry name" value="GluRS_core"/>
</dbReference>
<dbReference type="InterPro" id="IPR014729">
    <property type="entry name" value="Rossmann-like_a/b/a_fold"/>
</dbReference>
<dbReference type="NCBIfam" id="TIGR00464">
    <property type="entry name" value="gltX_bact"/>
    <property type="match status" value="1"/>
</dbReference>
<dbReference type="PANTHER" id="PTHR43311">
    <property type="entry name" value="GLUTAMATE--TRNA LIGASE"/>
    <property type="match status" value="1"/>
</dbReference>
<dbReference type="PANTHER" id="PTHR43311:SF2">
    <property type="entry name" value="GLUTAMATE--TRNA LIGASE, MITOCHONDRIAL-RELATED"/>
    <property type="match status" value="1"/>
</dbReference>
<dbReference type="Pfam" id="PF19269">
    <property type="entry name" value="Anticodon_2"/>
    <property type="match status" value="1"/>
</dbReference>
<dbReference type="Pfam" id="PF00749">
    <property type="entry name" value="tRNA-synt_1c"/>
    <property type="match status" value="1"/>
</dbReference>
<dbReference type="PRINTS" id="PR00987">
    <property type="entry name" value="TRNASYNTHGLU"/>
</dbReference>
<dbReference type="SUPFAM" id="SSF48163">
    <property type="entry name" value="An anticodon-binding domain of class I aminoacyl-tRNA synthetases"/>
    <property type="match status" value="1"/>
</dbReference>
<dbReference type="SUPFAM" id="SSF52374">
    <property type="entry name" value="Nucleotidylyl transferase"/>
    <property type="match status" value="1"/>
</dbReference>
<dbReference type="PROSITE" id="PS00178">
    <property type="entry name" value="AA_TRNA_LIGASE_I"/>
    <property type="match status" value="1"/>
</dbReference>
<name>SYE_PHOV8</name>
<comment type="function">
    <text evidence="1">Catalyzes the attachment of glutamate to tRNA(Glu) in a two-step reaction: glutamate is first activated by ATP to form Glu-AMP and then transferred to the acceptor end of tRNA(Glu).</text>
</comment>
<comment type="catalytic activity">
    <reaction evidence="1">
        <text>tRNA(Glu) + L-glutamate + ATP = L-glutamyl-tRNA(Glu) + AMP + diphosphate</text>
        <dbReference type="Rhea" id="RHEA:23540"/>
        <dbReference type="Rhea" id="RHEA-COMP:9663"/>
        <dbReference type="Rhea" id="RHEA-COMP:9680"/>
        <dbReference type="ChEBI" id="CHEBI:29985"/>
        <dbReference type="ChEBI" id="CHEBI:30616"/>
        <dbReference type="ChEBI" id="CHEBI:33019"/>
        <dbReference type="ChEBI" id="CHEBI:78442"/>
        <dbReference type="ChEBI" id="CHEBI:78520"/>
        <dbReference type="ChEBI" id="CHEBI:456215"/>
        <dbReference type="EC" id="6.1.1.17"/>
    </reaction>
</comment>
<comment type="subunit">
    <text evidence="1">Monomer.</text>
</comment>
<comment type="subcellular location">
    <subcellularLocation>
        <location evidence="1">Cytoplasm</location>
    </subcellularLocation>
</comment>
<comment type="similarity">
    <text evidence="1">Belongs to the class-I aminoacyl-tRNA synthetase family. Glutamate--tRNA ligase type 1 subfamily.</text>
</comment>
<sequence>MSERKVRVRFAPSPTGALHIGGVRTALYNYLFARQHGGDLIFRIEDTDSNRFVPGAEEYIIESFKWLGINFDEGVSFGGNYGPYRQSERRDIYKKYVQVLLDSGKAYIAFDTPAELDAKRQEISNFQYDASTRMSMRNSLTLPKEEVDALIADGKQYVVRFKIEPNEDVHVHDIIRGEVVINSSILDDKVLYKSADELPTYHLANIVDDHLMEVSHVIRGEEWLPSAPLHVLLYRAFGWADTMPEFAHLPLLLKPDGNGKLSKRDGDRLGFPVFPLEWHDPKTGEVSSGYRESGYLPEAVINFLALLGWNPGNDQELMSLDELVKLFDLHRCSKAGAKFDFEKGKWFNHEYILKKSNEEVAGLFMPILKEHGIEAPMDKVVTVVGLMKDRVSFIKDLWETCKFFFVAPTEYDEKTRKKRWKEDSPERMLELADVLEALDDFSLENQEAVVMKWIEDKGYHLGNIMNAFRLTLVGEGKGPHMFDISAVLGKEETLRRIRRAVEVLK</sequence>
<feature type="chain" id="PRO_1000001872" description="Glutamate--tRNA ligase">
    <location>
        <begin position="1"/>
        <end position="505"/>
    </location>
</feature>
<feature type="short sequence motif" description="'HIGH' region" evidence="1">
    <location>
        <begin position="12"/>
        <end position="22"/>
    </location>
</feature>
<feature type="short sequence motif" description="'KMSKS' region" evidence="1">
    <location>
        <begin position="260"/>
        <end position="264"/>
    </location>
</feature>
<feature type="binding site" evidence="1">
    <location>
        <position position="263"/>
    </location>
    <ligand>
        <name>ATP</name>
        <dbReference type="ChEBI" id="CHEBI:30616"/>
    </ligand>
</feature>
<evidence type="ECO:0000255" key="1">
    <source>
        <dbReference type="HAMAP-Rule" id="MF_00022"/>
    </source>
</evidence>
<gene>
    <name evidence="1" type="primary">gltX</name>
    <name type="ordered locus">BVU_1475</name>
</gene>
<proteinExistence type="inferred from homology"/>
<organism>
    <name type="scientific">Phocaeicola vulgatus (strain ATCC 8482 / DSM 1447 / JCM 5826 / CCUG 4940 / NBRC 14291 / NCTC 11154)</name>
    <name type="common">Bacteroides vulgatus</name>
    <dbReference type="NCBI Taxonomy" id="435590"/>
    <lineage>
        <taxon>Bacteria</taxon>
        <taxon>Pseudomonadati</taxon>
        <taxon>Bacteroidota</taxon>
        <taxon>Bacteroidia</taxon>
        <taxon>Bacteroidales</taxon>
        <taxon>Bacteroidaceae</taxon>
        <taxon>Phocaeicola</taxon>
    </lineage>
</organism>
<reference key="1">
    <citation type="journal article" date="2007" name="PLoS Biol.">
        <title>Evolution of symbiotic bacteria in the distal human intestine.</title>
        <authorList>
            <person name="Xu J."/>
            <person name="Mahowald M.A."/>
            <person name="Ley R.E."/>
            <person name="Lozupone C.A."/>
            <person name="Hamady M."/>
            <person name="Martens E.C."/>
            <person name="Henrissat B."/>
            <person name="Coutinho P.M."/>
            <person name="Minx P."/>
            <person name="Latreille P."/>
            <person name="Cordum H."/>
            <person name="Van Brunt A."/>
            <person name="Kim K."/>
            <person name="Fulton R.S."/>
            <person name="Fulton L.A."/>
            <person name="Clifton S.W."/>
            <person name="Wilson R.K."/>
            <person name="Knight R.D."/>
            <person name="Gordon J.I."/>
        </authorList>
    </citation>
    <scope>NUCLEOTIDE SEQUENCE [LARGE SCALE GENOMIC DNA]</scope>
    <source>
        <strain>ATCC 8482 / DSM 1447 / JCM 5826 / CCUG 4940 / NBRC 14291 / NCTC 11154</strain>
    </source>
</reference>
<keyword id="KW-0030">Aminoacyl-tRNA synthetase</keyword>
<keyword id="KW-0067">ATP-binding</keyword>
<keyword id="KW-0963">Cytoplasm</keyword>
<keyword id="KW-0436">Ligase</keyword>
<keyword id="KW-0547">Nucleotide-binding</keyword>
<keyword id="KW-0648">Protein biosynthesis</keyword>